<evidence type="ECO:0000255" key="1">
    <source>
        <dbReference type="HAMAP-Rule" id="MF_01691"/>
    </source>
</evidence>
<dbReference type="EC" id="2.3.1.89" evidence="1"/>
<dbReference type="EMBL" id="CP000705">
    <property type="protein sequence ID" value="ABQ82880.1"/>
    <property type="molecule type" value="Genomic_DNA"/>
</dbReference>
<dbReference type="RefSeq" id="WP_003668295.1">
    <property type="nucleotide sequence ID" value="NC_009513.1"/>
</dbReference>
<dbReference type="SMR" id="A5VJ56"/>
<dbReference type="STRING" id="557436.Lreu_0613"/>
<dbReference type="KEGG" id="lre:Lreu_0613"/>
<dbReference type="PATRIC" id="fig|557436.17.peg.685"/>
<dbReference type="eggNOG" id="COG2171">
    <property type="taxonomic scope" value="Bacteria"/>
</dbReference>
<dbReference type="HOGENOM" id="CLU_103751_0_0_9"/>
<dbReference type="OMA" id="KHCHIGA"/>
<dbReference type="UniPathway" id="UPA00034">
    <property type="reaction ID" value="UER00022"/>
</dbReference>
<dbReference type="Proteomes" id="UP000001991">
    <property type="component" value="Chromosome"/>
</dbReference>
<dbReference type="GO" id="GO:0047200">
    <property type="term" value="F:tetrahydrodipicolinate N-acetyltransferase activity"/>
    <property type="evidence" value="ECO:0007669"/>
    <property type="project" value="UniProtKB-EC"/>
</dbReference>
<dbReference type="GO" id="GO:0019877">
    <property type="term" value="P:diaminopimelate biosynthetic process"/>
    <property type="evidence" value="ECO:0007669"/>
    <property type="project" value="UniProtKB-UniRule"/>
</dbReference>
<dbReference type="GO" id="GO:0009089">
    <property type="term" value="P:lysine biosynthetic process via diaminopimelate"/>
    <property type="evidence" value="ECO:0007669"/>
    <property type="project" value="UniProtKB-UniRule"/>
</dbReference>
<dbReference type="CDD" id="cd03350">
    <property type="entry name" value="LbH_THP_succinylT"/>
    <property type="match status" value="1"/>
</dbReference>
<dbReference type="Gene3D" id="2.160.10.10">
    <property type="entry name" value="Hexapeptide repeat proteins"/>
    <property type="match status" value="1"/>
</dbReference>
<dbReference type="Gene3D" id="3.30.70.250">
    <property type="entry name" value="Malonyl-CoA ACP transacylase, ACP-binding"/>
    <property type="match status" value="1"/>
</dbReference>
<dbReference type="HAMAP" id="MF_01691">
    <property type="entry name" value="DapH"/>
    <property type="match status" value="1"/>
</dbReference>
<dbReference type="InterPro" id="IPR019873">
    <property type="entry name" value="DapH"/>
</dbReference>
<dbReference type="InterPro" id="IPR013710">
    <property type="entry name" value="DapH_N"/>
</dbReference>
<dbReference type="InterPro" id="IPR001451">
    <property type="entry name" value="Hexapep"/>
</dbReference>
<dbReference type="InterPro" id="IPR018357">
    <property type="entry name" value="Hexapep_transf_CS"/>
</dbReference>
<dbReference type="InterPro" id="IPR050179">
    <property type="entry name" value="Trans_hexapeptide_repeat"/>
</dbReference>
<dbReference type="InterPro" id="IPR011004">
    <property type="entry name" value="Trimer_LpxA-like_sf"/>
</dbReference>
<dbReference type="NCBIfam" id="TIGR03532">
    <property type="entry name" value="DapD_Ac"/>
    <property type="match status" value="1"/>
</dbReference>
<dbReference type="PANTHER" id="PTHR43300:SF10">
    <property type="entry name" value="2,3,4,5-TETRAHYDROPYRIDINE-2,6-DICARBOXYLATE N-ACETYLTRANSFERASE"/>
    <property type="match status" value="1"/>
</dbReference>
<dbReference type="PANTHER" id="PTHR43300">
    <property type="entry name" value="ACETYLTRANSFERASE"/>
    <property type="match status" value="1"/>
</dbReference>
<dbReference type="Pfam" id="PF08503">
    <property type="entry name" value="DapH_N"/>
    <property type="match status" value="1"/>
</dbReference>
<dbReference type="Pfam" id="PF00132">
    <property type="entry name" value="Hexapep"/>
    <property type="match status" value="1"/>
</dbReference>
<dbReference type="Pfam" id="PF14602">
    <property type="entry name" value="Hexapep_2"/>
    <property type="match status" value="1"/>
</dbReference>
<dbReference type="SUPFAM" id="SSF51161">
    <property type="entry name" value="Trimeric LpxA-like enzymes"/>
    <property type="match status" value="1"/>
</dbReference>
<dbReference type="PROSITE" id="PS00101">
    <property type="entry name" value="HEXAPEP_TRANSFERASES"/>
    <property type="match status" value="1"/>
</dbReference>
<name>DAPH_LIMRD</name>
<sequence length="236" mass="24877">MAELDAQTIINYISNAPKKTPVKVYLKGNLGDLEFPAEVETFLEQHTGVIFGDWTVIEPLLKEYSSAIESYHVENDARNSAVPLLDLKNINARIEPGAIIRDKVLIGDNAVIMMGATINIGAEIGADSMIDMGAVLGGRAIVGRHCHIGAGTVLAGVVEPASAEPVRIDDNVMVGANAVVIEGVHVGEGAVIAAGAIVTHDVAPHTMVAGVPAKFIKNVDDQTAGKTELEDDLRKL</sequence>
<protein>
    <recommendedName>
        <fullName evidence="1">2,3,4,5-tetrahydropyridine-2,6-dicarboxylate N-acetyltransferase</fullName>
        <ecNumber evidence="1">2.3.1.89</ecNumber>
    </recommendedName>
    <alternativeName>
        <fullName evidence="1">Tetrahydrodipicolinate N-acetyltransferase</fullName>
        <shortName evidence="1">THP acetyltransferase</shortName>
        <shortName evidence="1">Tetrahydropicolinate acetylase</shortName>
    </alternativeName>
</protein>
<keyword id="KW-0012">Acyltransferase</keyword>
<keyword id="KW-0028">Amino-acid biosynthesis</keyword>
<keyword id="KW-0220">Diaminopimelate biosynthesis</keyword>
<keyword id="KW-0457">Lysine biosynthesis</keyword>
<keyword id="KW-1185">Reference proteome</keyword>
<keyword id="KW-0677">Repeat</keyword>
<keyword id="KW-0808">Transferase</keyword>
<proteinExistence type="inferred from homology"/>
<reference key="1">
    <citation type="journal article" date="2011" name="PLoS Genet.">
        <title>The evolution of host specialization in the vertebrate gut symbiont Lactobacillus reuteri.</title>
        <authorList>
            <person name="Frese S.A."/>
            <person name="Benson A.K."/>
            <person name="Tannock G.W."/>
            <person name="Loach D.M."/>
            <person name="Kim J."/>
            <person name="Zhang M."/>
            <person name="Oh P.L."/>
            <person name="Heng N.C."/>
            <person name="Patil P.B."/>
            <person name="Juge N."/>
            <person name="Mackenzie D.A."/>
            <person name="Pearson B.M."/>
            <person name="Lapidus A."/>
            <person name="Dalin E."/>
            <person name="Tice H."/>
            <person name="Goltsman E."/>
            <person name="Land M."/>
            <person name="Hauser L."/>
            <person name="Ivanova N."/>
            <person name="Kyrpides N.C."/>
            <person name="Walter J."/>
        </authorList>
    </citation>
    <scope>NUCLEOTIDE SEQUENCE [LARGE SCALE GENOMIC DNA]</scope>
    <source>
        <strain>DSM 20016</strain>
    </source>
</reference>
<feature type="chain" id="PRO_0000376668" description="2,3,4,5-tetrahydropyridine-2,6-dicarboxylate N-acetyltransferase">
    <location>
        <begin position="1"/>
        <end position="236"/>
    </location>
</feature>
<comment type="function">
    <text evidence="1">Catalyzes the transfer of an acetyl group from acetyl-CoA to tetrahydrodipicolinate.</text>
</comment>
<comment type="catalytic activity">
    <reaction evidence="1">
        <text>(S)-2,3,4,5-tetrahydrodipicolinate + acetyl-CoA + H2O = L-2-acetamido-6-oxoheptanedioate + CoA</text>
        <dbReference type="Rhea" id="RHEA:13085"/>
        <dbReference type="ChEBI" id="CHEBI:15377"/>
        <dbReference type="ChEBI" id="CHEBI:16845"/>
        <dbReference type="ChEBI" id="CHEBI:57287"/>
        <dbReference type="ChEBI" id="CHEBI:57288"/>
        <dbReference type="ChEBI" id="CHEBI:58117"/>
        <dbReference type="EC" id="2.3.1.89"/>
    </reaction>
</comment>
<comment type="pathway">
    <text evidence="1">Amino-acid biosynthesis; L-lysine biosynthesis via DAP pathway; LL-2,6-diaminopimelate from (S)-tetrahydrodipicolinate (acetylase route): step 1/3.</text>
</comment>
<comment type="similarity">
    <text evidence="1">Belongs to the transferase hexapeptide repeat family. DapH subfamily.</text>
</comment>
<gene>
    <name evidence="1" type="primary">dapH</name>
    <name type="ordered locus">Lreu_0613</name>
</gene>
<accession>A5VJ56</accession>
<organism>
    <name type="scientific">Limosilactobacillus reuteri (strain DSM 20016)</name>
    <name type="common">Lactobacillus reuteri</name>
    <dbReference type="NCBI Taxonomy" id="557436"/>
    <lineage>
        <taxon>Bacteria</taxon>
        <taxon>Bacillati</taxon>
        <taxon>Bacillota</taxon>
        <taxon>Bacilli</taxon>
        <taxon>Lactobacillales</taxon>
        <taxon>Lactobacillaceae</taxon>
        <taxon>Limosilactobacillus</taxon>
    </lineage>
</organism>